<feature type="chain" id="PRO_0000374619" description="tRNA-2-methylthio-N(6)-dimethylallyladenosine synthase">
    <location>
        <begin position="1"/>
        <end position="446"/>
    </location>
</feature>
<feature type="domain" description="MTTase N-terminal" evidence="1">
    <location>
        <begin position="2"/>
        <end position="119"/>
    </location>
</feature>
<feature type="domain" description="Radical SAM core" evidence="2">
    <location>
        <begin position="142"/>
        <end position="376"/>
    </location>
</feature>
<feature type="domain" description="TRAM" evidence="1">
    <location>
        <begin position="377"/>
        <end position="440"/>
    </location>
</feature>
<feature type="binding site" evidence="1">
    <location>
        <position position="11"/>
    </location>
    <ligand>
        <name>[4Fe-4S] cluster</name>
        <dbReference type="ChEBI" id="CHEBI:49883"/>
        <label>1</label>
    </ligand>
</feature>
<feature type="binding site" evidence="1">
    <location>
        <position position="48"/>
    </location>
    <ligand>
        <name>[4Fe-4S] cluster</name>
        <dbReference type="ChEBI" id="CHEBI:49883"/>
        <label>1</label>
    </ligand>
</feature>
<feature type="binding site" evidence="1">
    <location>
        <position position="82"/>
    </location>
    <ligand>
        <name>[4Fe-4S] cluster</name>
        <dbReference type="ChEBI" id="CHEBI:49883"/>
        <label>1</label>
    </ligand>
</feature>
<feature type="binding site" evidence="1">
    <location>
        <position position="156"/>
    </location>
    <ligand>
        <name>[4Fe-4S] cluster</name>
        <dbReference type="ChEBI" id="CHEBI:49883"/>
        <label>2</label>
        <note>4Fe-4S-S-AdoMet</note>
    </ligand>
</feature>
<feature type="binding site" evidence="1">
    <location>
        <position position="160"/>
    </location>
    <ligand>
        <name>[4Fe-4S] cluster</name>
        <dbReference type="ChEBI" id="CHEBI:49883"/>
        <label>2</label>
        <note>4Fe-4S-S-AdoMet</note>
    </ligand>
</feature>
<feature type="binding site" evidence="1">
    <location>
        <position position="163"/>
    </location>
    <ligand>
        <name>[4Fe-4S] cluster</name>
        <dbReference type="ChEBI" id="CHEBI:49883"/>
        <label>2</label>
        <note>4Fe-4S-S-AdoMet</note>
    </ligand>
</feature>
<gene>
    <name evidence="1" type="primary">miaB</name>
    <name type="ordered locus">Tbd_2706</name>
</gene>
<dbReference type="EC" id="2.8.4.3" evidence="1"/>
<dbReference type="EMBL" id="CP000116">
    <property type="protein sequence ID" value="AAZ98659.1"/>
    <property type="status" value="ALT_INIT"/>
    <property type="molecule type" value="Genomic_DNA"/>
</dbReference>
<dbReference type="RefSeq" id="WP_041432797.1">
    <property type="nucleotide sequence ID" value="NC_007404.1"/>
</dbReference>
<dbReference type="SMR" id="Q3SFF1"/>
<dbReference type="STRING" id="292415.Tbd_2706"/>
<dbReference type="KEGG" id="tbd:Tbd_2706"/>
<dbReference type="eggNOG" id="COG0621">
    <property type="taxonomic scope" value="Bacteria"/>
</dbReference>
<dbReference type="HOGENOM" id="CLU_018697_2_0_4"/>
<dbReference type="OrthoDB" id="9805215at2"/>
<dbReference type="Proteomes" id="UP000008291">
    <property type="component" value="Chromosome"/>
</dbReference>
<dbReference type="GO" id="GO:0005829">
    <property type="term" value="C:cytosol"/>
    <property type="evidence" value="ECO:0007669"/>
    <property type="project" value="TreeGrafter"/>
</dbReference>
<dbReference type="GO" id="GO:0051539">
    <property type="term" value="F:4 iron, 4 sulfur cluster binding"/>
    <property type="evidence" value="ECO:0007669"/>
    <property type="project" value="UniProtKB-UniRule"/>
</dbReference>
<dbReference type="GO" id="GO:0046872">
    <property type="term" value="F:metal ion binding"/>
    <property type="evidence" value="ECO:0007669"/>
    <property type="project" value="UniProtKB-KW"/>
</dbReference>
<dbReference type="GO" id="GO:0035597">
    <property type="term" value="F:N6-isopentenyladenosine methylthiotransferase activity"/>
    <property type="evidence" value="ECO:0007669"/>
    <property type="project" value="TreeGrafter"/>
</dbReference>
<dbReference type="CDD" id="cd01335">
    <property type="entry name" value="Radical_SAM"/>
    <property type="match status" value="1"/>
</dbReference>
<dbReference type="FunFam" id="3.40.50.12160:FF:000001">
    <property type="entry name" value="tRNA-2-methylthio-N(6)-dimethylallyladenosine synthase"/>
    <property type="match status" value="1"/>
</dbReference>
<dbReference type="FunFam" id="3.80.30.20:FF:000001">
    <property type="entry name" value="tRNA-2-methylthio-N(6)-dimethylallyladenosine synthase 2"/>
    <property type="match status" value="1"/>
</dbReference>
<dbReference type="Gene3D" id="3.40.50.12160">
    <property type="entry name" value="Methylthiotransferase, N-terminal domain"/>
    <property type="match status" value="1"/>
</dbReference>
<dbReference type="Gene3D" id="3.80.30.20">
    <property type="entry name" value="tm_1862 like domain"/>
    <property type="match status" value="1"/>
</dbReference>
<dbReference type="HAMAP" id="MF_01864">
    <property type="entry name" value="tRNA_metthiotr_MiaB"/>
    <property type="match status" value="1"/>
</dbReference>
<dbReference type="InterPro" id="IPR006638">
    <property type="entry name" value="Elp3/MiaA/NifB-like_rSAM"/>
</dbReference>
<dbReference type="InterPro" id="IPR005839">
    <property type="entry name" value="Methylthiotransferase"/>
</dbReference>
<dbReference type="InterPro" id="IPR020612">
    <property type="entry name" value="Methylthiotransferase_CS"/>
</dbReference>
<dbReference type="InterPro" id="IPR013848">
    <property type="entry name" value="Methylthiotransferase_N"/>
</dbReference>
<dbReference type="InterPro" id="IPR038135">
    <property type="entry name" value="Methylthiotransferase_N_sf"/>
</dbReference>
<dbReference type="InterPro" id="IPR006463">
    <property type="entry name" value="MiaB_methiolase"/>
</dbReference>
<dbReference type="InterPro" id="IPR007197">
    <property type="entry name" value="rSAM"/>
</dbReference>
<dbReference type="InterPro" id="IPR023404">
    <property type="entry name" value="rSAM_horseshoe"/>
</dbReference>
<dbReference type="InterPro" id="IPR002792">
    <property type="entry name" value="TRAM_dom"/>
</dbReference>
<dbReference type="NCBIfam" id="TIGR01574">
    <property type="entry name" value="miaB-methiolase"/>
    <property type="match status" value="1"/>
</dbReference>
<dbReference type="NCBIfam" id="TIGR00089">
    <property type="entry name" value="MiaB/RimO family radical SAM methylthiotransferase"/>
    <property type="match status" value="1"/>
</dbReference>
<dbReference type="PANTHER" id="PTHR43020">
    <property type="entry name" value="CDK5 REGULATORY SUBUNIT-ASSOCIATED PROTEIN 1"/>
    <property type="match status" value="1"/>
</dbReference>
<dbReference type="PANTHER" id="PTHR43020:SF2">
    <property type="entry name" value="MITOCHONDRIAL TRNA METHYLTHIOTRANSFERASE CDK5RAP1"/>
    <property type="match status" value="1"/>
</dbReference>
<dbReference type="Pfam" id="PF04055">
    <property type="entry name" value="Radical_SAM"/>
    <property type="match status" value="1"/>
</dbReference>
<dbReference type="Pfam" id="PF01938">
    <property type="entry name" value="TRAM"/>
    <property type="match status" value="1"/>
</dbReference>
<dbReference type="Pfam" id="PF00919">
    <property type="entry name" value="UPF0004"/>
    <property type="match status" value="1"/>
</dbReference>
<dbReference type="SFLD" id="SFLDF00273">
    <property type="entry name" value="(dimethylallyl)adenosine_tRNA"/>
    <property type="match status" value="1"/>
</dbReference>
<dbReference type="SFLD" id="SFLDG01082">
    <property type="entry name" value="B12-binding_domain_containing"/>
    <property type="match status" value="1"/>
</dbReference>
<dbReference type="SFLD" id="SFLDG01061">
    <property type="entry name" value="methylthiotransferase"/>
    <property type="match status" value="1"/>
</dbReference>
<dbReference type="SMART" id="SM00729">
    <property type="entry name" value="Elp3"/>
    <property type="match status" value="1"/>
</dbReference>
<dbReference type="SUPFAM" id="SSF102114">
    <property type="entry name" value="Radical SAM enzymes"/>
    <property type="match status" value="1"/>
</dbReference>
<dbReference type="PROSITE" id="PS51449">
    <property type="entry name" value="MTTASE_N"/>
    <property type="match status" value="1"/>
</dbReference>
<dbReference type="PROSITE" id="PS01278">
    <property type="entry name" value="MTTASE_RADICAL"/>
    <property type="match status" value="1"/>
</dbReference>
<dbReference type="PROSITE" id="PS51918">
    <property type="entry name" value="RADICAL_SAM"/>
    <property type="match status" value="1"/>
</dbReference>
<dbReference type="PROSITE" id="PS50926">
    <property type="entry name" value="TRAM"/>
    <property type="match status" value="1"/>
</dbReference>
<keyword id="KW-0004">4Fe-4S</keyword>
<keyword id="KW-0963">Cytoplasm</keyword>
<keyword id="KW-0408">Iron</keyword>
<keyword id="KW-0411">Iron-sulfur</keyword>
<keyword id="KW-0479">Metal-binding</keyword>
<keyword id="KW-1185">Reference proteome</keyword>
<keyword id="KW-0949">S-adenosyl-L-methionine</keyword>
<keyword id="KW-0808">Transferase</keyword>
<keyword id="KW-0819">tRNA processing</keyword>
<organism>
    <name type="scientific">Thiobacillus denitrificans (strain ATCC 25259 / T1)</name>
    <dbReference type="NCBI Taxonomy" id="292415"/>
    <lineage>
        <taxon>Bacteria</taxon>
        <taxon>Pseudomonadati</taxon>
        <taxon>Pseudomonadota</taxon>
        <taxon>Betaproteobacteria</taxon>
        <taxon>Nitrosomonadales</taxon>
        <taxon>Thiobacillaceae</taxon>
        <taxon>Thiobacillus</taxon>
    </lineage>
</organism>
<name>MIAB_THIDA</name>
<evidence type="ECO:0000255" key="1">
    <source>
        <dbReference type="HAMAP-Rule" id="MF_01864"/>
    </source>
</evidence>
<evidence type="ECO:0000255" key="2">
    <source>
        <dbReference type="PROSITE-ProRule" id="PRU01266"/>
    </source>
</evidence>
<evidence type="ECO:0000305" key="3"/>
<proteinExistence type="inferred from homology"/>
<protein>
    <recommendedName>
        <fullName evidence="1">tRNA-2-methylthio-N(6)-dimethylallyladenosine synthase</fullName>
        <ecNumber evidence="1">2.8.4.3</ecNumber>
    </recommendedName>
    <alternativeName>
        <fullName evidence="1">(Dimethylallyl)adenosine tRNA methylthiotransferase MiaB</fullName>
    </alternativeName>
    <alternativeName>
        <fullName evidence="1">tRNA-i(6)A37 methylthiotransferase</fullName>
    </alternativeName>
</protein>
<reference key="1">
    <citation type="journal article" date="2006" name="J. Bacteriol.">
        <title>The genome sequence of the obligately chemolithoautotrophic, facultatively anaerobic bacterium Thiobacillus denitrificans.</title>
        <authorList>
            <person name="Beller H.R."/>
            <person name="Chain P.S."/>
            <person name="Letain T.E."/>
            <person name="Chakicherla A."/>
            <person name="Larimer F.W."/>
            <person name="Richardson P.M."/>
            <person name="Coleman M.A."/>
            <person name="Wood A.P."/>
            <person name="Kelly D.P."/>
        </authorList>
    </citation>
    <scope>NUCLEOTIDE SEQUENCE [LARGE SCALE GENOMIC DNA]</scope>
    <source>
        <strain>ATCC 25259 / T1</strain>
    </source>
</reference>
<sequence>MKKIYIKTFGCQMNEYDSDKMADVLNAAEGLTPTSTPEDADVILFNTCSVREKAQEKVFHDLGRVRHLKQANPNLIIGVGGCVASQEGAAIVARAPFVDVVFGPQTLHRLPELIAQRRETGRAQVDISFPEIEKFDHLPPARVEGGAAFVSIMEGCSKYCTFCVVPYTRGEEVSRPFDDVIAEVANLAARGVKEITLLGQNVNAYQGALDEGGTADFAFLLEMVHEIPGVERIRYTTSHPREMTQRLIECYGKLPKLVSHLHLPVQSGSDRILAAMKRGHTVLEFKSIVRKLREQRSDLCLSSDFIVGFPGETGADFEATMKLVEELNFDASFSFIYSKRPGTPAADYADDVSAELKTQRLMRLQARIEAQAQGVNRSMVGSVQRVLVEGQARKNANELAGRTGNNRIVNFAGPSRLLGQFVDVTITQALPHSLRGEAVTLETLHT</sequence>
<accession>Q3SFF1</accession>
<comment type="function">
    <text evidence="1">Catalyzes the methylthiolation of N6-(dimethylallyl)adenosine (i(6)A), leading to the formation of 2-methylthio-N6-(dimethylallyl)adenosine (ms(2)i(6)A) at position 37 in tRNAs that read codons beginning with uridine.</text>
</comment>
<comment type="catalytic activity">
    <reaction evidence="1">
        <text>N(6)-dimethylallyladenosine(37) in tRNA + (sulfur carrier)-SH + AH2 + 2 S-adenosyl-L-methionine = 2-methylsulfanyl-N(6)-dimethylallyladenosine(37) in tRNA + (sulfur carrier)-H + 5'-deoxyadenosine + L-methionine + A + S-adenosyl-L-homocysteine + 2 H(+)</text>
        <dbReference type="Rhea" id="RHEA:37067"/>
        <dbReference type="Rhea" id="RHEA-COMP:10375"/>
        <dbReference type="Rhea" id="RHEA-COMP:10376"/>
        <dbReference type="Rhea" id="RHEA-COMP:14737"/>
        <dbReference type="Rhea" id="RHEA-COMP:14739"/>
        <dbReference type="ChEBI" id="CHEBI:13193"/>
        <dbReference type="ChEBI" id="CHEBI:15378"/>
        <dbReference type="ChEBI" id="CHEBI:17319"/>
        <dbReference type="ChEBI" id="CHEBI:17499"/>
        <dbReference type="ChEBI" id="CHEBI:29917"/>
        <dbReference type="ChEBI" id="CHEBI:57844"/>
        <dbReference type="ChEBI" id="CHEBI:57856"/>
        <dbReference type="ChEBI" id="CHEBI:59789"/>
        <dbReference type="ChEBI" id="CHEBI:64428"/>
        <dbReference type="ChEBI" id="CHEBI:74415"/>
        <dbReference type="ChEBI" id="CHEBI:74417"/>
        <dbReference type="EC" id="2.8.4.3"/>
    </reaction>
</comment>
<comment type="cofactor">
    <cofactor evidence="1">
        <name>[4Fe-4S] cluster</name>
        <dbReference type="ChEBI" id="CHEBI:49883"/>
    </cofactor>
    <text evidence="1">Binds 2 [4Fe-4S] clusters. One cluster is coordinated with 3 cysteines and an exchangeable S-adenosyl-L-methionine.</text>
</comment>
<comment type="subunit">
    <text evidence="1">Monomer.</text>
</comment>
<comment type="subcellular location">
    <subcellularLocation>
        <location evidence="1">Cytoplasm</location>
    </subcellularLocation>
</comment>
<comment type="similarity">
    <text evidence="1">Belongs to the methylthiotransferase family. MiaB subfamily.</text>
</comment>
<comment type="sequence caution" evidence="3">
    <conflict type="erroneous initiation">
        <sequence resource="EMBL-CDS" id="AAZ98659"/>
    </conflict>
</comment>